<evidence type="ECO:0000255" key="1">
    <source>
        <dbReference type="HAMAP-Rule" id="MF_01562"/>
    </source>
</evidence>
<organism>
    <name type="scientific">Thermus thermophilus (strain ATCC BAA-163 / DSM 7039 / HB27)</name>
    <dbReference type="NCBI Taxonomy" id="262724"/>
    <lineage>
        <taxon>Bacteria</taxon>
        <taxon>Thermotogati</taxon>
        <taxon>Deinococcota</taxon>
        <taxon>Deinococci</taxon>
        <taxon>Thermales</taxon>
        <taxon>Thermaceae</taxon>
        <taxon>Thermus</taxon>
    </lineage>
</organism>
<accession>Q72JT2</accession>
<gene>
    <name evidence="1" type="primary">floA</name>
    <name type="ordered locus">TT_C0686</name>
</gene>
<dbReference type="EMBL" id="AE017221">
    <property type="protein sequence ID" value="AAS81034.1"/>
    <property type="molecule type" value="Genomic_DNA"/>
</dbReference>
<dbReference type="RefSeq" id="WP_011173128.1">
    <property type="nucleotide sequence ID" value="NC_005835.1"/>
</dbReference>
<dbReference type="SMR" id="Q72JT2"/>
<dbReference type="GeneID" id="3168773"/>
<dbReference type="KEGG" id="tth:TT_C0686"/>
<dbReference type="eggNOG" id="COG4864">
    <property type="taxonomic scope" value="Bacteria"/>
</dbReference>
<dbReference type="HOGENOM" id="CLU_836378_0_0_0"/>
<dbReference type="OrthoDB" id="9808365at2"/>
<dbReference type="Proteomes" id="UP000000592">
    <property type="component" value="Chromosome"/>
</dbReference>
<dbReference type="GO" id="GO:0045121">
    <property type="term" value="C:membrane raft"/>
    <property type="evidence" value="ECO:0007669"/>
    <property type="project" value="UniProtKB-SubCell"/>
</dbReference>
<dbReference type="GO" id="GO:0005886">
    <property type="term" value="C:plasma membrane"/>
    <property type="evidence" value="ECO:0007669"/>
    <property type="project" value="UniProtKB-SubCell"/>
</dbReference>
<dbReference type="HAMAP" id="MF_01562">
    <property type="entry name" value="FloA"/>
    <property type="match status" value="1"/>
</dbReference>
<dbReference type="InterPro" id="IPR022853">
    <property type="entry name" value="FloA"/>
</dbReference>
<dbReference type="NCBIfam" id="NF010186">
    <property type="entry name" value="PRK13665.1"/>
    <property type="match status" value="1"/>
</dbReference>
<dbReference type="Pfam" id="PF12127">
    <property type="entry name" value="FloA"/>
    <property type="match status" value="1"/>
</dbReference>
<protein>
    <recommendedName>
        <fullName evidence="1">Flotillin-like protein FloA</fullName>
    </recommendedName>
</protein>
<sequence>MEGLGIVFLAAVVLLFVFLFFSFIPVGLWISAWAAGVRVPLLTLVAMRLRRVPPAKIIYPLIKATKAGLDVRLDRLEAHYLAGGNVDRVVDALIAADKAGIKLTFDRAAAIDLAGRDVLEAVRVSVNPKVIQTPMVAAVAKDGIQLLATARVTVRANIDRLVGGAGEETIIARVGEGIVTTIGSANSHKEVLENPDRISKTVLEKGLDAGTAFEILSVDIADVDVGKNIGAQLQIDQAEADKKIAQAKAEERRAMAVAAEQENRALVEAMRAKLVEAQAQVPLALAEALRKGHLGVMDYYRLKNIEADTDMRESISRAAKPEGEE</sequence>
<reference key="1">
    <citation type="journal article" date="2004" name="Nat. Biotechnol.">
        <title>The genome sequence of the extreme thermophile Thermus thermophilus.</title>
        <authorList>
            <person name="Henne A."/>
            <person name="Brueggemann H."/>
            <person name="Raasch C."/>
            <person name="Wiezer A."/>
            <person name="Hartsch T."/>
            <person name="Liesegang H."/>
            <person name="Johann A."/>
            <person name="Lienard T."/>
            <person name="Gohl O."/>
            <person name="Martinez-Arias R."/>
            <person name="Jacobi C."/>
            <person name="Starkuviene V."/>
            <person name="Schlenczeck S."/>
            <person name="Dencker S."/>
            <person name="Huber R."/>
            <person name="Klenk H.-P."/>
            <person name="Kramer W."/>
            <person name="Merkl R."/>
            <person name="Gottschalk G."/>
            <person name="Fritz H.-J."/>
        </authorList>
    </citation>
    <scope>NUCLEOTIDE SEQUENCE [LARGE SCALE GENOMIC DNA]</scope>
    <source>
        <strain>ATCC BAA-163 / DSM 7039 / HB27</strain>
    </source>
</reference>
<proteinExistence type="inferred from homology"/>
<keyword id="KW-1003">Cell membrane</keyword>
<keyword id="KW-0472">Membrane</keyword>
<keyword id="KW-0812">Transmembrane</keyword>
<keyword id="KW-1133">Transmembrane helix</keyword>
<name>FLOA_THET2</name>
<feature type="chain" id="PRO_0000232571" description="Flotillin-like protein FloA">
    <location>
        <begin position="1"/>
        <end position="325"/>
    </location>
</feature>
<feature type="transmembrane region" description="Helical" evidence="1">
    <location>
        <begin position="4"/>
        <end position="24"/>
    </location>
</feature>
<feature type="transmembrane region" description="Helical" evidence="1">
    <location>
        <begin position="26"/>
        <end position="46"/>
    </location>
</feature>
<comment type="function">
    <text evidence="1">Found in functional membrane microdomains (FMM) that may be equivalent to eukaryotic membrane rafts. FMMs are highly dynamic and increase in number as cells age. Flotillins are thought to be important factors in membrane fluidity.</text>
</comment>
<comment type="subunit">
    <text evidence="1">Homooligomerizes.</text>
</comment>
<comment type="subcellular location">
    <subcellularLocation>
        <location evidence="1">Cell membrane</location>
        <topology evidence="1">Multi-pass membrane protein</topology>
    </subcellularLocation>
    <subcellularLocation>
        <location evidence="1">Membrane raft</location>
        <topology evidence="1">Multi-pass membrane protein</topology>
    </subcellularLocation>
</comment>
<comment type="similarity">
    <text evidence="1">Belongs to the flotillin-like FloA family.</text>
</comment>